<protein>
    <recommendedName>
        <fullName>Subtilisin inhibitor</fullName>
    </recommendedName>
    <alternativeName>
        <fullName>SSI type</fullName>
    </alternativeName>
</protein>
<proteinExistence type="evidence at protein level"/>
<dbReference type="EMBL" id="D00402">
    <property type="protein sequence ID" value="BAA00305.1"/>
    <property type="molecule type" value="Genomic_DNA"/>
</dbReference>
<dbReference type="EMBL" id="AH000937">
    <property type="protein sequence ID" value="AAA26821.1"/>
    <property type="molecule type" value="Genomic_DNA"/>
</dbReference>
<dbReference type="EMBL" id="AH000937">
    <property type="protein sequence ID" value="AAA26822.1"/>
    <property type="molecule type" value="Genomic_DNA"/>
</dbReference>
<dbReference type="EMBL" id="X73049">
    <property type="protein sequence ID" value="CAA51525.1"/>
    <property type="molecule type" value="Genomic_DNA"/>
</dbReference>
<dbReference type="EMBL" id="M54887">
    <property type="protein sequence ID" value="AAA26827.1"/>
    <property type="molecule type" value="Genomic_DNA"/>
</dbReference>
<dbReference type="PIR" id="JX0066">
    <property type="entry name" value="XSSMA"/>
</dbReference>
<dbReference type="PDB" id="2SIC">
    <property type="method" value="X-ray"/>
    <property type="resolution" value="1.80 A"/>
    <property type="chains" value="I=38-144"/>
</dbReference>
<dbReference type="PDB" id="2TLD">
    <property type="method" value="X-ray"/>
    <property type="resolution" value="2.60 A"/>
    <property type="chains" value="I=35-144"/>
</dbReference>
<dbReference type="PDB" id="3SIC">
    <property type="method" value="X-ray"/>
    <property type="resolution" value="1.80 A"/>
    <property type="chains" value="I=38-144"/>
</dbReference>
<dbReference type="PDB" id="3SSI">
    <property type="method" value="X-ray"/>
    <property type="resolution" value="2.30 A"/>
    <property type="chains" value="A=32-144"/>
</dbReference>
<dbReference type="PDB" id="5SIC">
    <property type="method" value="X-ray"/>
    <property type="resolution" value="2.20 A"/>
    <property type="chains" value="I=38-144"/>
</dbReference>
<dbReference type="PDBsum" id="2SIC"/>
<dbReference type="PDBsum" id="2TLD"/>
<dbReference type="PDBsum" id="3SIC"/>
<dbReference type="PDBsum" id="3SSI"/>
<dbReference type="PDBsum" id="5SIC"/>
<dbReference type="SMR" id="P01006"/>
<dbReference type="MINT" id="P01006"/>
<dbReference type="MEROPS" id="I16.003"/>
<dbReference type="EvolutionaryTrace" id="P01006"/>
<dbReference type="GO" id="GO:0005576">
    <property type="term" value="C:extracellular region"/>
    <property type="evidence" value="ECO:0007669"/>
    <property type="project" value="UniProtKB-SubCell"/>
</dbReference>
<dbReference type="GO" id="GO:0004867">
    <property type="term" value="F:serine-type endopeptidase inhibitor activity"/>
    <property type="evidence" value="ECO:0007669"/>
    <property type="project" value="UniProtKB-UniRule"/>
</dbReference>
<dbReference type="Gene3D" id="3.30.350.10">
    <property type="entry name" value="Subtilisin inhibitor-like"/>
    <property type="match status" value="1"/>
</dbReference>
<dbReference type="HAMAP" id="MF_00778">
    <property type="entry name" value="SSI"/>
    <property type="match status" value="1"/>
</dbReference>
<dbReference type="InterPro" id="IPR000691">
    <property type="entry name" value="Prot_inh_I16_SSI"/>
</dbReference>
<dbReference type="InterPro" id="IPR020054">
    <property type="entry name" value="Prot_inh_SSI_I16_CS"/>
</dbReference>
<dbReference type="InterPro" id="IPR023549">
    <property type="entry name" value="Subtilisin_inhibitor"/>
</dbReference>
<dbReference type="InterPro" id="IPR036819">
    <property type="entry name" value="Subtilisin_inhibitor-like_sf"/>
</dbReference>
<dbReference type="Pfam" id="PF00720">
    <property type="entry name" value="SSI"/>
    <property type="match status" value="1"/>
</dbReference>
<dbReference type="PRINTS" id="PR00294">
    <property type="entry name" value="SSBTLNINHBTR"/>
</dbReference>
<dbReference type="SUPFAM" id="SSF55399">
    <property type="entry name" value="Subtilisin inhibitor"/>
    <property type="match status" value="1"/>
</dbReference>
<dbReference type="PROSITE" id="PS00999">
    <property type="entry name" value="SSI"/>
    <property type="match status" value="1"/>
</dbReference>
<name>SSI_STRAO</name>
<reference key="1">
    <citation type="journal article" date="1989" name="J. Biochem.">
        <title>Molecular cloning and nucleotide sequence determination of gene encoding Streptomyces subtilisin inhibitor (SSI).</title>
        <authorList>
            <person name="Obata S."/>
            <person name="Taguchi S."/>
            <person name="Kumagai I."/>
            <person name="Miura K."/>
        </authorList>
    </citation>
    <scope>NUCLEOTIDE SEQUENCE [GENOMIC DNA]</scope>
    <source>
        <strain>S-3253</strain>
    </source>
</reference>
<reference key="2">
    <citation type="journal article" date="1988" name="Proc. Jpn. Acad., B, Phys. Biol. Sci.">
        <title>Partial alteration of a protein Streptomyces subtilisin inhibitor by site-directed mutagenesis.</title>
        <authorList>
            <person name="Miura K."/>
            <person name="Kumagai I."/>
            <person name="Obata S."/>
            <person name="Kojima S."/>
            <person name="Taguchi S."/>
        </authorList>
    </citation>
    <scope>NUCLEOTIDE SEQUENCE [GENOMIC DNA]</scope>
</reference>
<reference key="3">
    <citation type="journal article" date="1989" name="Gene">
        <title>Analysis of transcriptional control regions in the Streptomyces subtilisin-inhibitor-encoding gene.</title>
        <authorList>
            <person name="Taguchi S."/>
            <person name="Nishiyama K."/>
            <person name="Kumagai I."/>
            <person name="Miura K."/>
        </authorList>
    </citation>
    <scope>NUCLEOTIDE SEQUENCE [GENOMIC DNA] OF 32-144</scope>
    <source>
        <strain>S-3253</strain>
    </source>
</reference>
<reference key="4">
    <citation type="journal article" date="1993" name="Biochim. Biophys. Acta">
        <title>Effect of a rare leucine codon, TTA, on expression of a foreign gene in Streptomyces lividans.</title>
        <authorList>
            <person name="Ueda Y."/>
            <person name="Taguchi S."/>
            <person name="Nishiyama K."/>
            <person name="Kumagai I."/>
            <person name="Miura K."/>
        </authorList>
    </citation>
    <scope>NUCLEOTIDE SEQUENCE [GENOMIC DNA] OF 32-144</scope>
</reference>
<reference key="5">
    <citation type="journal article" date="1974" name="J. Biochem.">
        <title>Amino acid sequence of an alkaline proteinase inhibitor (Streptomyces subtilisin inhibitor) from Streptomyces albogriseolus S-3253.</title>
        <authorList>
            <person name="Ikenaka T."/>
            <person name="Odani S."/>
            <person name="Sakai M."/>
            <person name="Nabeshima Y."/>
            <person name="Sato S."/>
            <person name="Murao S."/>
        </authorList>
    </citation>
    <scope>PROTEIN SEQUENCE OF 32-144</scope>
    <source>
        <strain>S-3253</strain>
    </source>
</reference>
<reference key="6">
    <citation type="journal article" date="1980" name="J. Biochem.">
        <title>Importance of the carboxyl-terminal four amino acid residues in the inhibitory activity of Streptomyces subtilisin inhibitor (with a revision of its carboxyl-terminal sequence).</title>
        <authorList>
            <person name="Sakai M."/>
            <person name="Odani S."/>
            <person name="Ikenaka T."/>
        </authorList>
    </citation>
    <scope>SEQUENCE REVISION TO 142-143</scope>
</reference>
<reference key="7">
    <citation type="journal article" date="1979" name="Nature">
        <title>Crystal structures of Streptomyces subtilisin inhibitor and its complex with subtilisin BPN'.</title>
        <authorList>
            <person name="Mitsui Y."/>
            <person name="Satow Y."/>
            <person name="Watanabe Y."/>
            <person name="Hirono S."/>
            <person name="Iitaka Y."/>
        </authorList>
    </citation>
    <scope>X-RAY CRYSTALLOGRAPHY (2.6 ANGSTROMS)</scope>
</reference>
<reference key="8">
    <citation type="journal article" date="1984" name="J. Mol. Biol.">
        <title>Crystal structure at 2.6-A resolution of the complex of subtilisin BPN' with streptomyces subtilisin inhibitor.</title>
        <authorList>
            <person name="Hirono S."/>
            <person name="Akagawa H."/>
            <person name="Mitsui Y."/>
            <person name="Iitaka Y."/>
        </authorList>
    </citation>
    <scope>X-RAY CRYSTALLOGRAPHY (2.6 ANGSTROMS)</scope>
</reference>
<reference key="9">
    <citation type="journal article" date="1990" name="Biotechnology (N.Y.)">
        <title>Alteration of the specificity of the Streptomyces subtilisin inhibitor by gene engineering.</title>
        <authorList>
            <person name="Kojima S."/>
            <person name="Obata S."/>
            <person name="Kumagai I."/>
            <person name="Miura K."/>
        </authorList>
    </citation>
    <scope>MUTAGENESIS OF MET-104</scope>
</reference>
<reference key="10">
    <citation type="journal article" date="1991" name="J. Biochem.">
        <title>Inhibition of subtilisin BPN' by reaction site P1 mutants of Streptomyces subtilisin inhibitor.</title>
        <authorList>
            <person name="Kojima S."/>
            <person name="Nishiyama Y."/>
            <person name="Kumagai I."/>
            <person name="Miura K."/>
        </authorList>
    </citation>
    <scope>MUTAGENESIS OF MET-104</scope>
</reference>
<gene>
    <name type="primary">ssi</name>
</gene>
<organism>
    <name type="scientific">Streptomyces albogriseolus</name>
    <dbReference type="NCBI Taxonomy" id="1887"/>
    <lineage>
        <taxon>Bacteria</taxon>
        <taxon>Bacillati</taxon>
        <taxon>Actinomycetota</taxon>
        <taxon>Actinomycetes</taxon>
        <taxon>Kitasatosporales</taxon>
        <taxon>Streptomycetaceae</taxon>
        <taxon>Streptomyces</taxon>
        <taxon>Streptomyces albogriseolus group</taxon>
    </lineage>
</organism>
<keyword id="KW-0002">3D-structure</keyword>
<keyword id="KW-0903">Direct protein sequencing</keyword>
<keyword id="KW-1015">Disulfide bond</keyword>
<keyword id="KW-0646">Protease inhibitor</keyword>
<keyword id="KW-0677">Repeat</keyword>
<keyword id="KW-0964">Secreted</keyword>
<keyword id="KW-0722">Serine protease inhibitor</keyword>
<keyword id="KW-0732">Signal</keyword>
<comment type="function">
    <text>Strong inhibitor of bacterial serine proteases such as subtilisin.</text>
</comment>
<comment type="subunit">
    <text>Homodimer.</text>
</comment>
<comment type="subcellular location">
    <subcellularLocation>
        <location>Secreted</location>
    </subcellularLocation>
</comment>
<comment type="similarity">
    <text evidence="5">Belongs to the protease inhibitor I16 (SSI) family.</text>
</comment>
<feature type="signal peptide" evidence="4">
    <location>
        <begin position="1"/>
        <end position="31"/>
    </location>
</feature>
<feature type="chain" id="PRO_0000033270" description="Subtilisin inhibitor">
    <location>
        <begin position="32"/>
        <end position="144"/>
    </location>
</feature>
<feature type="repeat">
    <location>
        <begin position="33"/>
        <end position="37"/>
    </location>
</feature>
<feature type="repeat">
    <location>
        <begin position="39"/>
        <end position="43"/>
    </location>
</feature>
<feature type="region of interest" description="Disordered" evidence="1">
    <location>
        <begin position="1"/>
        <end position="25"/>
    </location>
</feature>
<feature type="compositionally biased region" description="Low complexity" evidence="1">
    <location>
        <begin position="1"/>
        <end position="12"/>
    </location>
</feature>
<feature type="site" description="Reactive bond for subtilisin">
    <location>
        <begin position="104"/>
        <end position="105"/>
    </location>
</feature>
<feature type="disulfide bond">
    <location>
        <begin position="66"/>
        <end position="81"/>
    </location>
</feature>
<feature type="disulfide bond">
    <location>
        <begin position="102"/>
        <end position="132"/>
    </location>
</feature>
<feature type="mutagenesis site" description="Decrease in inhibition." evidence="2 3">
    <original>M</original>
    <variation>D</variation>
    <variation>E</variation>
    <variation>V</variation>
    <variation>I</variation>
    <variation>G</variation>
    <variation>P</variation>
    <location>
        <position position="104"/>
    </location>
</feature>
<feature type="mutagenesis site" description="Also inhibits trypsin." evidence="2 3">
    <original>M</original>
    <variation>K</variation>
    <variation>R</variation>
    <location>
        <position position="104"/>
    </location>
</feature>
<feature type="mutagenesis site" description="Also inhibits chymotrypsin." evidence="2 3">
    <original>M</original>
    <variation>Y</variation>
    <variation>W</variation>
    <location>
        <position position="104"/>
    </location>
</feature>
<feature type="strand" evidence="6">
    <location>
        <begin position="42"/>
        <end position="52"/>
    </location>
</feature>
<feature type="turn" evidence="7">
    <location>
        <begin position="53"/>
        <end position="55"/>
    </location>
</feature>
<feature type="strand" evidence="6">
    <location>
        <begin position="60"/>
        <end position="65"/>
    </location>
</feature>
<feature type="strand" evidence="6">
    <location>
        <begin position="67"/>
        <end position="69"/>
    </location>
</feature>
<feature type="strand" evidence="6">
    <location>
        <begin position="71"/>
        <end position="73"/>
    </location>
</feature>
<feature type="helix" evidence="6">
    <location>
        <begin position="77"/>
        <end position="87"/>
    </location>
</feature>
<feature type="helix" evidence="7">
    <location>
        <begin position="91"/>
        <end position="93"/>
    </location>
</feature>
<feature type="strand" evidence="6">
    <location>
        <begin position="98"/>
        <end position="103"/>
    </location>
</feature>
<feature type="strand" evidence="6">
    <location>
        <begin position="109"/>
        <end position="117"/>
    </location>
</feature>
<feature type="strand" evidence="6">
    <location>
        <begin position="120"/>
        <end position="130"/>
    </location>
</feature>
<feature type="helix" evidence="6">
    <location>
        <begin position="131"/>
        <end position="135"/>
    </location>
</feature>
<feature type="strand" evidence="6">
    <location>
        <begin position="138"/>
        <end position="140"/>
    </location>
</feature>
<sequence length="144" mass="14312">MRNTGAGPSPSVSRPPPSAAPLSGAALAAPGDAPSALYAPSALVLTVGKGVSATTAAPERAVTLTCAPGPSGTHPAAGSACADLAAVGGDLNALTRGEDVMCPMVYDPVLLTVDGVWQGKRVSYERVFSNECEMNAHGSSVFAF</sequence>
<accession>P01006</accession>
<evidence type="ECO:0000256" key="1">
    <source>
        <dbReference type="SAM" id="MobiDB-lite"/>
    </source>
</evidence>
<evidence type="ECO:0000269" key="2">
    <source>
    </source>
</evidence>
<evidence type="ECO:0000269" key="3">
    <source>
    </source>
</evidence>
<evidence type="ECO:0000269" key="4">
    <source>
    </source>
</evidence>
<evidence type="ECO:0000305" key="5"/>
<evidence type="ECO:0007829" key="6">
    <source>
        <dbReference type="PDB" id="2SIC"/>
    </source>
</evidence>
<evidence type="ECO:0007829" key="7">
    <source>
        <dbReference type="PDB" id="3SSI"/>
    </source>
</evidence>